<comment type="function">
    <text evidence="4">MFS-type transporter; part of the gene cluster that mediates the biosynthesis of astellolides, drimane-type sesquiterpene esters that show antimicrobial, anti-inflammatory, and anti-tumor activities (PubMed:27628599). Seems not to be involved in astellolides translocation (PubMed:27628599).</text>
</comment>
<comment type="subcellular location">
    <subcellularLocation>
        <location evidence="1">Membrane</location>
        <topology evidence="1">Multi-pass membrane protein</topology>
    </subcellularLocation>
</comment>
<comment type="induction">
    <text evidence="4">Expression is regulated by the secondary metabolite regulator cclA.</text>
</comment>
<comment type="disruption phenotype">
    <text evidence="4">Does not affect the production of astellolides.</text>
</comment>
<comment type="similarity">
    <text evidence="6">Belongs to the major facilitator superfamily. TCR/Tet family.</text>
</comment>
<gene>
    <name evidence="5" type="primary">astH</name>
    <name type="ORF">AO090026000577</name>
</gene>
<feature type="chain" id="PRO_0000450122" description="MFS-type transporter astH">
    <location>
        <begin position="1"/>
        <end position="564"/>
    </location>
</feature>
<feature type="transmembrane region" description="Helical" evidence="1">
    <location>
        <begin position="69"/>
        <end position="89"/>
    </location>
</feature>
<feature type="transmembrane region" description="Helical" evidence="1">
    <location>
        <begin position="106"/>
        <end position="126"/>
    </location>
</feature>
<feature type="transmembrane region" description="Helical" evidence="1">
    <location>
        <begin position="143"/>
        <end position="163"/>
    </location>
</feature>
<feature type="transmembrane region" description="Helical" evidence="1">
    <location>
        <begin position="197"/>
        <end position="217"/>
    </location>
</feature>
<feature type="transmembrane region" description="Helical" evidence="1">
    <location>
        <begin position="225"/>
        <end position="245"/>
    </location>
</feature>
<feature type="transmembrane region" description="Helical" evidence="1">
    <location>
        <begin position="266"/>
        <end position="286"/>
    </location>
</feature>
<feature type="transmembrane region" description="Helical" evidence="1">
    <location>
        <begin position="297"/>
        <end position="317"/>
    </location>
</feature>
<feature type="transmembrane region" description="Helical" evidence="1">
    <location>
        <begin position="339"/>
        <end position="359"/>
    </location>
</feature>
<feature type="transmembrane region" description="Helical" evidence="1">
    <location>
        <begin position="375"/>
        <end position="395"/>
    </location>
</feature>
<feature type="transmembrane region" description="Helical" evidence="1">
    <location>
        <begin position="396"/>
        <end position="416"/>
    </location>
</feature>
<feature type="transmembrane region" description="Helical" evidence="1">
    <location>
        <begin position="461"/>
        <end position="481"/>
    </location>
</feature>
<feature type="transmembrane region" description="Helical" evidence="1">
    <location>
        <begin position="537"/>
        <end position="557"/>
    </location>
</feature>
<feature type="region of interest" description="Disordered" evidence="3">
    <location>
        <begin position="26"/>
        <end position="59"/>
    </location>
</feature>
<feature type="compositionally biased region" description="Polar residues" evidence="3">
    <location>
        <begin position="43"/>
        <end position="53"/>
    </location>
</feature>
<feature type="glycosylation site" description="N-linked (GlcNAc...) asparagine" evidence="2">
    <location>
        <position position="23"/>
    </location>
</feature>
<feature type="glycosylation site" description="N-linked (GlcNAc...) asparagine" evidence="2">
    <location>
        <position position="220"/>
    </location>
</feature>
<feature type="glycosylation site" description="N-linked (GlcNAc...) asparagine" evidence="2">
    <location>
        <position position="425"/>
    </location>
</feature>
<keyword id="KW-0325">Glycoprotein</keyword>
<keyword id="KW-0472">Membrane</keyword>
<keyword id="KW-1185">Reference proteome</keyword>
<keyword id="KW-0812">Transmembrane</keyword>
<keyword id="KW-1133">Transmembrane helix</keyword>
<keyword id="KW-0813">Transport</keyword>
<sequence length="564" mass="60176">MTDISTGVQLKPGIGDGTVYNGNMSKDTLVNCSPDPENPEKGQASSPRTQISVDDNEESTTEYPSSWKLAMIMISLCLAVFCLALDTTIMATAIPKIADQFNSLNDVGWYGSAYLLTTSALTLSFGKLYSFYSIKWVYLQALGMFEIGSLICGATPNSLGLIIGRAIAGSGSAGIYSGSMLIVARSAPLERRPLLTGILGGLFGVASVVGPLIGGAFTDNLSWRWCFYINLPLGAVTGLFLILFFDGAKATTQRATIRDQLSQLDLLGSLCFLPAIICVLLALQWGGTTYPWHDGRIIALFTVFGVLLLAFAGVQWWRQEKATVPPRLIANRNVWGAALFSFCLNASFIIFTYYLPMWFQSIKGVTATQSGIMNLPMVLAVVIFSIISGGLVGALGYYTPFMVIAPLIAAIGAGLLSTLRMDSNNASWIGYQILYGVGVGCGLQQPIVAVQGSLAPADLPTGTVIVMFMQTIGGAIFMSVGQNVFQNQLMRNLATQAPSVDAARVLQAGATMLRKTVSSDLLPAALRAYNSAITEAFYVAVAMAVLALPGALVMQWISVKGRQL</sequence>
<proteinExistence type="evidence at transcript level"/>
<protein>
    <recommendedName>
        <fullName evidence="5">MFS-type transporter astH</fullName>
    </recommendedName>
    <alternativeName>
        <fullName evidence="5">Astellolide biosynthesis cluster protein H</fullName>
    </alternativeName>
</protein>
<organism>
    <name type="scientific">Aspergillus oryzae (strain ATCC 42149 / RIB 40)</name>
    <name type="common">Yellow koji mold</name>
    <dbReference type="NCBI Taxonomy" id="510516"/>
    <lineage>
        <taxon>Eukaryota</taxon>
        <taxon>Fungi</taxon>
        <taxon>Dikarya</taxon>
        <taxon>Ascomycota</taxon>
        <taxon>Pezizomycotina</taxon>
        <taxon>Eurotiomycetes</taxon>
        <taxon>Eurotiomycetidae</taxon>
        <taxon>Eurotiales</taxon>
        <taxon>Aspergillaceae</taxon>
        <taxon>Aspergillus</taxon>
        <taxon>Aspergillus subgen. Circumdati</taxon>
    </lineage>
</organism>
<reference key="1">
    <citation type="journal article" date="2005" name="Nature">
        <title>Genome sequencing and analysis of Aspergillus oryzae.</title>
        <authorList>
            <person name="Machida M."/>
            <person name="Asai K."/>
            <person name="Sano M."/>
            <person name="Tanaka T."/>
            <person name="Kumagai T."/>
            <person name="Terai G."/>
            <person name="Kusumoto K."/>
            <person name="Arima T."/>
            <person name="Akita O."/>
            <person name="Kashiwagi Y."/>
            <person name="Abe K."/>
            <person name="Gomi K."/>
            <person name="Horiuchi H."/>
            <person name="Kitamoto K."/>
            <person name="Kobayashi T."/>
            <person name="Takeuchi M."/>
            <person name="Denning D.W."/>
            <person name="Galagan J.E."/>
            <person name="Nierman W.C."/>
            <person name="Yu J."/>
            <person name="Archer D.B."/>
            <person name="Bennett J.W."/>
            <person name="Bhatnagar D."/>
            <person name="Cleveland T.E."/>
            <person name="Fedorova N.D."/>
            <person name="Gotoh O."/>
            <person name="Horikawa H."/>
            <person name="Hosoyama A."/>
            <person name="Ichinomiya M."/>
            <person name="Igarashi R."/>
            <person name="Iwashita K."/>
            <person name="Juvvadi P.R."/>
            <person name="Kato M."/>
            <person name="Kato Y."/>
            <person name="Kin T."/>
            <person name="Kokubun A."/>
            <person name="Maeda H."/>
            <person name="Maeyama N."/>
            <person name="Maruyama J."/>
            <person name="Nagasaki H."/>
            <person name="Nakajima T."/>
            <person name="Oda K."/>
            <person name="Okada K."/>
            <person name="Paulsen I."/>
            <person name="Sakamoto K."/>
            <person name="Sawano T."/>
            <person name="Takahashi M."/>
            <person name="Takase K."/>
            <person name="Terabayashi Y."/>
            <person name="Wortman J.R."/>
            <person name="Yamada O."/>
            <person name="Yamagata Y."/>
            <person name="Anazawa H."/>
            <person name="Hata Y."/>
            <person name="Koide Y."/>
            <person name="Komori T."/>
            <person name="Koyama Y."/>
            <person name="Minetoki T."/>
            <person name="Suharnan S."/>
            <person name="Tanaka A."/>
            <person name="Isono K."/>
            <person name="Kuhara S."/>
            <person name="Ogasawara N."/>
            <person name="Kikuchi H."/>
        </authorList>
    </citation>
    <scope>NUCLEOTIDE SEQUENCE [LARGE SCALE GENOMIC DNA]</scope>
    <source>
        <strain>ATCC 42149 / RIB 40</strain>
    </source>
</reference>
<reference key="2">
    <citation type="journal article" date="2016" name="Sci. Rep.">
        <title>Identification of a novel sesquiterpene biosynthetic machinery involved in astellolide biosynthesis.</title>
        <authorList>
            <person name="Shinohara Y."/>
            <person name="Takahashi S."/>
            <person name="Osada H."/>
            <person name="Koyama Y."/>
        </authorList>
    </citation>
    <scope>INDUCTION</scope>
    <scope>FUNCTION</scope>
    <scope>DISRUPTION PHENOTYPE</scope>
</reference>
<dbReference type="EMBL" id="BA000051">
    <property type="protein sequence ID" value="BAE60006.1"/>
    <property type="molecule type" value="Genomic_DNA"/>
</dbReference>
<dbReference type="RefSeq" id="XP_001822008.1">
    <property type="nucleotide sequence ID" value="XM_001821956.1"/>
</dbReference>
<dbReference type="SMR" id="Q2UEK9"/>
<dbReference type="GlyCosmos" id="Q2UEK9">
    <property type="glycosylation" value="3 sites, No reported glycans"/>
</dbReference>
<dbReference type="EnsemblFungi" id="BAE60006">
    <property type="protein sequence ID" value="BAE60006"/>
    <property type="gene ID" value="AO090026000577"/>
</dbReference>
<dbReference type="GeneID" id="5994036"/>
<dbReference type="KEGG" id="aor:AO090026000577"/>
<dbReference type="VEuPathDB" id="FungiDB:AO090026000577"/>
<dbReference type="HOGENOM" id="CLU_000960_22_1_1"/>
<dbReference type="OMA" id="QLSWGKV"/>
<dbReference type="OrthoDB" id="59992at5052"/>
<dbReference type="Proteomes" id="UP000006564">
    <property type="component" value="Chromosome 3"/>
</dbReference>
<dbReference type="GO" id="GO:0005886">
    <property type="term" value="C:plasma membrane"/>
    <property type="evidence" value="ECO:0007669"/>
    <property type="project" value="TreeGrafter"/>
</dbReference>
<dbReference type="GO" id="GO:0022857">
    <property type="term" value="F:transmembrane transporter activity"/>
    <property type="evidence" value="ECO:0007669"/>
    <property type="project" value="InterPro"/>
</dbReference>
<dbReference type="CDD" id="cd17502">
    <property type="entry name" value="MFS_Azr1_MDR_like"/>
    <property type="match status" value="1"/>
</dbReference>
<dbReference type="FunFam" id="1.20.1250.20:FF:000196">
    <property type="entry name" value="MFS toxin efflux pump (AflT)"/>
    <property type="match status" value="1"/>
</dbReference>
<dbReference type="FunFam" id="1.20.1720.10:FF:000012">
    <property type="entry name" value="MFS toxin efflux pump (AflT)"/>
    <property type="match status" value="1"/>
</dbReference>
<dbReference type="Gene3D" id="1.20.1250.20">
    <property type="entry name" value="MFS general substrate transporter like domains"/>
    <property type="match status" value="1"/>
</dbReference>
<dbReference type="Gene3D" id="1.20.1720.10">
    <property type="entry name" value="Multidrug resistance protein D"/>
    <property type="match status" value="1"/>
</dbReference>
<dbReference type="InterPro" id="IPR011701">
    <property type="entry name" value="MFS"/>
</dbReference>
<dbReference type="InterPro" id="IPR020846">
    <property type="entry name" value="MFS_dom"/>
</dbReference>
<dbReference type="InterPro" id="IPR036259">
    <property type="entry name" value="MFS_trans_sf"/>
</dbReference>
<dbReference type="PANTHER" id="PTHR23501">
    <property type="entry name" value="MAJOR FACILITATOR SUPERFAMILY"/>
    <property type="match status" value="1"/>
</dbReference>
<dbReference type="PANTHER" id="PTHR23501:SF199">
    <property type="entry name" value="MFS EFFLUX TRANSPORTER INPD-RELATED"/>
    <property type="match status" value="1"/>
</dbReference>
<dbReference type="Pfam" id="PF07690">
    <property type="entry name" value="MFS_1"/>
    <property type="match status" value="1"/>
</dbReference>
<dbReference type="PRINTS" id="PR01036">
    <property type="entry name" value="TCRTETB"/>
</dbReference>
<dbReference type="SUPFAM" id="SSF103473">
    <property type="entry name" value="MFS general substrate transporter"/>
    <property type="match status" value="1"/>
</dbReference>
<dbReference type="PROSITE" id="PS50850">
    <property type="entry name" value="MFS"/>
    <property type="match status" value="1"/>
</dbReference>
<accession>Q2UEK9</accession>
<name>ASTH_ASPOR</name>
<evidence type="ECO:0000255" key="1"/>
<evidence type="ECO:0000255" key="2">
    <source>
        <dbReference type="PROSITE-ProRule" id="PRU00498"/>
    </source>
</evidence>
<evidence type="ECO:0000256" key="3">
    <source>
        <dbReference type="SAM" id="MobiDB-lite"/>
    </source>
</evidence>
<evidence type="ECO:0000269" key="4">
    <source>
    </source>
</evidence>
<evidence type="ECO:0000303" key="5">
    <source>
    </source>
</evidence>
<evidence type="ECO:0000305" key="6"/>